<sequence length="606" mass="68570">MCGISACLNHTNNSAMTSVVNALTKLQNRGYDSAGICTTSNGKFNFVKSVSDDTNNAIHYIKNNPLANHHCSIAIGHTRWATHGEKTIENAHPHFDASGRFSLIHNGIIENYDQIKSMLVESQNYQFYGQTDTEVAVAYLSYLLSENKTWFDFNESLKGSWAIIALDKFNPEKLYFMRNGSPLIIGFNETNTKAMIVSELSGFDSDISQYCIVGDNDYGYITNNNDKYIIKSQQHYQMISMGKIVMDLTPSPYKHWTQREIYDQPNAIHSLITERIVDSQLFFPEFNTINFTLVEHIVLLGCGTSYHAAQIGRRYIREFRPNITVDVIDGADFEETDIPKSRNTLLILLSQSGETKDLYRALVIGKQHSLKTIGIINVENSLIAREVDTVLYLRAGRENAVASTKSFTNQVLMLFMLALKINLSLDNSQLDYYTMSLNNFPIEFKKIIDQSVNEIPKLLEFFDNQTSCFILGKFGLEWIAKEGSLKIKEISYVHSEGYSSAALKHGPFALLHQNIPVVLLANDDSYFSKIENANSEIRSRKAKVIFITNKLIDNHCTDYLIHINTKSPLFHLLCIVPLQLLAYHLALSKGINPDYPRNLAKVVTVE</sequence>
<evidence type="ECO:0000250" key="1"/>
<evidence type="ECO:0000255" key="2">
    <source>
        <dbReference type="PROSITE-ProRule" id="PRU00609"/>
    </source>
</evidence>
<evidence type="ECO:0000255" key="3">
    <source>
        <dbReference type="PROSITE-ProRule" id="PRU00797"/>
    </source>
</evidence>
<evidence type="ECO:0000305" key="4"/>
<accession>Q7T6X6</accession>
<proteinExistence type="inferred from homology"/>
<feature type="initiator methionine" description="Removed; by host" evidence="1">
    <location>
        <position position="1"/>
    </location>
</feature>
<feature type="chain" id="PRO_0000135286" description="Probable glutamine--fructose-6-phosphate aminotransferase [isomerizing]">
    <location>
        <begin position="2"/>
        <end position="606"/>
    </location>
</feature>
<feature type="domain" description="Glutamine amidotransferase type-2" evidence="2">
    <location>
        <begin position="2"/>
        <end position="224"/>
    </location>
</feature>
<feature type="domain" description="SIS 1" evidence="3">
    <location>
        <begin position="282"/>
        <end position="427"/>
    </location>
</feature>
<feature type="domain" description="SIS 2" evidence="3">
    <location>
        <begin position="458"/>
        <end position="596"/>
    </location>
</feature>
<feature type="active site" description="For GATase activity" evidence="1">
    <location>
        <position position="2"/>
    </location>
</feature>
<organismHost>
    <name type="scientific">Acanthamoeba polyphaga</name>
    <name type="common">Amoeba</name>
    <dbReference type="NCBI Taxonomy" id="5757"/>
</organismHost>
<gene>
    <name type="ordered locus">MIMI_L619</name>
</gene>
<reference key="1">
    <citation type="journal article" date="2004" name="Science">
        <title>The 1.2-megabase genome sequence of Mimivirus.</title>
        <authorList>
            <person name="Raoult D."/>
            <person name="Audic S."/>
            <person name="Robert C."/>
            <person name="Abergel C."/>
            <person name="Renesto P."/>
            <person name="Ogata H."/>
            <person name="La Scola B."/>
            <person name="Susan M."/>
            <person name="Claverie J.-M."/>
        </authorList>
    </citation>
    <scope>NUCLEOTIDE SEQUENCE [LARGE SCALE GENOMIC DNA]</scope>
    <source>
        <strain>Rowbotham-Bradford</strain>
    </source>
</reference>
<organism>
    <name type="scientific">Acanthamoeba polyphaga mimivirus</name>
    <name type="common">APMV</name>
    <dbReference type="NCBI Taxonomy" id="212035"/>
    <lineage>
        <taxon>Viruses</taxon>
        <taxon>Varidnaviria</taxon>
        <taxon>Bamfordvirae</taxon>
        <taxon>Nucleocytoviricota</taxon>
        <taxon>Megaviricetes</taxon>
        <taxon>Imitervirales</taxon>
        <taxon>Mimiviridae</taxon>
        <taxon>Megamimivirinae</taxon>
        <taxon>Mimivirus</taxon>
        <taxon>Mimivirus bradfordmassiliense</taxon>
    </lineage>
</organism>
<name>GFAT_MIMIV</name>
<comment type="function">
    <text evidence="4">Controls the flux of glucose into the hexosamine pathway. Most likely involved in regulating the availability of precursors for glycosylation of proteins (Potential).</text>
</comment>
<comment type="catalytic activity">
    <reaction>
        <text>D-fructose 6-phosphate + L-glutamine = D-glucosamine 6-phosphate + L-glutamate</text>
        <dbReference type="Rhea" id="RHEA:13237"/>
        <dbReference type="ChEBI" id="CHEBI:29985"/>
        <dbReference type="ChEBI" id="CHEBI:58359"/>
        <dbReference type="ChEBI" id="CHEBI:58725"/>
        <dbReference type="ChEBI" id="CHEBI:61527"/>
        <dbReference type="EC" id="2.6.1.16"/>
    </reaction>
</comment>
<comment type="pathway">
    <text>Nucleotide-sugar biosynthesis; UDP-N-acetyl-alpha-D-glucosamine biosynthesis; alpha-D-glucosamine 6-phosphate from D-fructose 6-phosphate: step 1/1.</text>
</comment>
<dbReference type="EC" id="2.6.1.16"/>
<dbReference type="EMBL" id="AY653733">
    <property type="protein sequence ID" value="AAQ09584.2"/>
    <property type="molecule type" value="Genomic_DNA"/>
</dbReference>
<dbReference type="SMR" id="Q7T6X6"/>
<dbReference type="MEROPS" id="C44.A08"/>
<dbReference type="KEGG" id="vg:9925259"/>
<dbReference type="OrthoDB" id="3394at10239"/>
<dbReference type="UniPathway" id="UPA00113">
    <property type="reaction ID" value="UER00528"/>
</dbReference>
<dbReference type="Proteomes" id="UP000001134">
    <property type="component" value="Genome"/>
</dbReference>
<dbReference type="GO" id="GO:0097367">
    <property type="term" value="F:carbohydrate derivative binding"/>
    <property type="evidence" value="ECO:0007669"/>
    <property type="project" value="InterPro"/>
</dbReference>
<dbReference type="GO" id="GO:0004360">
    <property type="term" value="F:glutamine-fructose-6-phosphate transaminase (isomerizing) activity"/>
    <property type="evidence" value="ECO:0007669"/>
    <property type="project" value="UniProtKB-EC"/>
</dbReference>
<dbReference type="GO" id="GO:0006002">
    <property type="term" value="P:fructose 6-phosphate metabolic process"/>
    <property type="evidence" value="ECO:0007669"/>
    <property type="project" value="TreeGrafter"/>
</dbReference>
<dbReference type="GO" id="GO:0006487">
    <property type="term" value="P:protein N-linked glycosylation"/>
    <property type="evidence" value="ECO:0007669"/>
    <property type="project" value="TreeGrafter"/>
</dbReference>
<dbReference type="GO" id="GO:0006048">
    <property type="term" value="P:UDP-N-acetylglucosamine biosynthetic process"/>
    <property type="evidence" value="ECO:0007669"/>
    <property type="project" value="UniProtKB-UniPathway"/>
</dbReference>
<dbReference type="CDD" id="cd05008">
    <property type="entry name" value="SIS_GlmS_GlmD_1"/>
    <property type="match status" value="1"/>
</dbReference>
<dbReference type="CDD" id="cd05009">
    <property type="entry name" value="SIS_GlmS_GlmD_2"/>
    <property type="match status" value="1"/>
</dbReference>
<dbReference type="Gene3D" id="3.40.50.10490">
    <property type="entry name" value="Glucose-6-phosphate isomerase like protein, domain 1"/>
    <property type="match status" value="2"/>
</dbReference>
<dbReference type="Gene3D" id="3.60.20.10">
    <property type="entry name" value="Glutamine Phosphoribosylpyrophosphate, subunit 1, domain 1"/>
    <property type="match status" value="1"/>
</dbReference>
<dbReference type="InterPro" id="IPR017932">
    <property type="entry name" value="GATase_2_dom"/>
</dbReference>
<dbReference type="InterPro" id="IPR005855">
    <property type="entry name" value="GFAT"/>
</dbReference>
<dbReference type="InterPro" id="IPR035466">
    <property type="entry name" value="GlmS/AgaS_SIS"/>
</dbReference>
<dbReference type="InterPro" id="IPR035490">
    <property type="entry name" value="GlmS/FrlB_SIS"/>
</dbReference>
<dbReference type="InterPro" id="IPR029055">
    <property type="entry name" value="Ntn_hydrolases_N"/>
</dbReference>
<dbReference type="InterPro" id="IPR001347">
    <property type="entry name" value="SIS_dom"/>
</dbReference>
<dbReference type="InterPro" id="IPR046348">
    <property type="entry name" value="SIS_dom_sf"/>
</dbReference>
<dbReference type="NCBIfam" id="TIGR01135">
    <property type="entry name" value="glmS"/>
    <property type="match status" value="1"/>
</dbReference>
<dbReference type="NCBIfam" id="NF001484">
    <property type="entry name" value="PRK00331.1"/>
    <property type="match status" value="1"/>
</dbReference>
<dbReference type="PANTHER" id="PTHR10937">
    <property type="entry name" value="GLUCOSAMINE--FRUCTOSE-6-PHOSPHATE AMINOTRANSFERASE, ISOMERIZING"/>
    <property type="match status" value="1"/>
</dbReference>
<dbReference type="PANTHER" id="PTHR10937:SF0">
    <property type="entry name" value="GLUTAMINE--FRUCTOSE-6-PHOSPHATE TRANSAMINASE (ISOMERIZING)"/>
    <property type="match status" value="1"/>
</dbReference>
<dbReference type="Pfam" id="PF13522">
    <property type="entry name" value="GATase_6"/>
    <property type="match status" value="1"/>
</dbReference>
<dbReference type="Pfam" id="PF01380">
    <property type="entry name" value="SIS"/>
    <property type="match status" value="2"/>
</dbReference>
<dbReference type="SUPFAM" id="SSF56235">
    <property type="entry name" value="N-terminal nucleophile aminohydrolases (Ntn hydrolases)"/>
    <property type="match status" value="1"/>
</dbReference>
<dbReference type="SUPFAM" id="SSF53697">
    <property type="entry name" value="SIS domain"/>
    <property type="match status" value="1"/>
</dbReference>
<dbReference type="PROSITE" id="PS51278">
    <property type="entry name" value="GATASE_TYPE_2"/>
    <property type="match status" value="1"/>
</dbReference>
<dbReference type="PROSITE" id="PS51464">
    <property type="entry name" value="SIS"/>
    <property type="match status" value="2"/>
</dbReference>
<protein>
    <recommendedName>
        <fullName>Probable glutamine--fructose-6-phosphate aminotransferase [isomerizing]</fullName>
        <shortName>GFAT</shortName>
        <ecNumber>2.6.1.16</ecNumber>
    </recommendedName>
    <alternativeName>
        <fullName>D-fructose-6-phosphate amidotransferase</fullName>
    </alternativeName>
    <alternativeName>
        <fullName>Hexosephosphate aminotransferase</fullName>
    </alternativeName>
</protein>
<keyword id="KW-0032">Aminotransferase</keyword>
<keyword id="KW-0315">Glutamine amidotransferase</keyword>
<keyword id="KW-1185">Reference proteome</keyword>
<keyword id="KW-0677">Repeat</keyword>
<keyword id="KW-0808">Transferase</keyword>